<name>LNT_THEMA</name>
<keyword id="KW-0012">Acyltransferase</keyword>
<keyword id="KW-0997">Cell inner membrane</keyword>
<keyword id="KW-1003">Cell membrane</keyword>
<keyword id="KW-0472">Membrane</keyword>
<keyword id="KW-1185">Reference proteome</keyword>
<keyword id="KW-0808">Transferase</keyword>
<keyword id="KW-0812">Transmembrane</keyword>
<keyword id="KW-1133">Transmembrane helix</keyword>
<proteinExistence type="inferred from homology"/>
<gene>
    <name evidence="1" type="primary">lnt</name>
    <name type="ordered locus">TM_0573</name>
</gene>
<accession>Q9WZ43</accession>
<comment type="function">
    <text evidence="1">Catalyzes the phospholipid dependent N-acylation of the N-terminal cysteine of apolipoprotein, the last step in lipoprotein maturation.</text>
</comment>
<comment type="catalytic activity">
    <reaction evidence="1">
        <text>N-terminal S-1,2-diacyl-sn-glyceryl-L-cysteinyl-[lipoprotein] + a glycerophospholipid = N-acyl-S-1,2-diacyl-sn-glyceryl-L-cysteinyl-[lipoprotein] + a 2-acyl-sn-glycero-3-phospholipid + H(+)</text>
        <dbReference type="Rhea" id="RHEA:48228"/>
        <dbReference type="Rhea" id="RHEA-COMP:14681"/>
        <dbReference type="Rhea" id="RHEA-COMP:14684"/>
        <dbReference type="ChEBI" id="CHEBI:15378"/>
        <dbReference type="ChEBI" id="CHEBI:136912"/>
        <dbReference type="ChEBI" id="CHEBI:140656"/>
        <dbReference type="ChEBI" id="CHEBI:140657"/>
        <dbReference type="ChEBI" id="CHEBI:140660"/>
        <dbReference type="EC" id="2.3.1.269"/>
    </reaction>
</comment>
<comment type="pathway">
    <text evidence="1">Protein modification; lipoprotein biosynthesis (N-acyl transfer).</text>
</comment>
<comment type="subcellular location">
    <subcellularLocation>
        <location evidence="1">Cell inner membrane</location>
        <topology evidence="1">Multi-pass membrane protein</topology>
    </subcellularLocation>
</comment>
<comment type="similarity">
    <text evidence="1">Belongs to the CN hydrolase family. Apolipoprotein N-acyltransferase subfamily.</text>
</comment>
<sequence length="503" mass="57394">MNRRRWWRSSERRWRGLVSLFLSVLSGFLTALSMPGFLSGALIWFSLIPLLYAVEGRGVWKRAFLSFVYFFTHVLISFFWVLPTLTENVPLVFGRYPSWLGIVVFVLMGIIEAVPFLGFGFLSYFAPQSIVLKTLYLASVYTIFEYLRGVGELGFTGGRISEALYSHTGLIQIVSITGTLGLVFLIVSLNVLFYEFLRRRKGLLIFPVIFFVYLLNSSVVHLLPVPERGSFKVVALQPNVPTSLKYSVSSGEMLELLESMTKDFHGSIVITPEAFFLEDVRYSQKLRELSEENTFVIGFPADNQNSVFVLEGGRFRKVYSKVKLFPFVEKLPYPRVFGVFSFLKGLSYYEPGRNFSVFNVGESPPLSVQICFESYFPEVSRAFVKNGSELLIVVTNDGWFHYKAALLNHFVQGVFRAVETRRQFLQVANTGITGLVDEYGRIVDALPLRVRLAGEFHIKARKGETFYVRYGDWFFYLSVILAVVSVFISRMRGERNEGIGIRL</sequence>
<protein>
    <recommendedName>
        <fullName evidence="1">Apolipoprotein N-acyltransferase</fullName>
        <shortName evidence="1">ALP N-acyltransferase</shortName>
        <ecNumber evidence="1">2.3.1.269</ecNumber>
    </recommendedName>
</protein>
<feature type="chain" id="PRO_0000178102" description="Apolipoprotein N-acyltransferase">
    <location>
        <begin position="1"/>
        <end position="503"/>
    </location>
</feature>
<feature type="transmembrane region" description="Helical" evidence="1">
    <location>
        <begin position="13"/>
        <end position="32"/>
    </location>
</feature>
<feature type="transmembrane region" description="Helical" evidence="1">
    <location>
        <begin position="34"/>
        <end position="54"/>
    </location>
</feature>
<feature type="transmembrane region" description="Helical" evidence="1">
    <location>
        <begin position="63"/>
        <end position="83"/>
    </location>
</feature>
<feature type="transmembrane region" description="Helical" evidence="1">
    <location>
        <begin position="102"/>
        <end position="122"/>
    </location>
</feature>
<feature type="transmembrane region" description="Helical" evidence="1">
    <location>
        <begin position="124"/>
        <end position="144"/>
    </location>
</feature>
<feature type="transmembrane region" description="Helical" evidence="1">
    <location>
        <begin position="173"/>
        <end position="193"/>
    </location>
</feature>
<feature type="transmembrane region" description="Helical" evidence="1">
    <location>
        <begin position="203"/>
        <end position="223"/>
    </location>
</feature>
<feature type="transmembrane region" description="Helical" evidence="1">
    <location>
        <begin position="468"/>
        <end position="488"/>
    </location>
</feature>
<feature type="domain" description="CN hydrolase" evidence="1">
    <location>
        <begin position="231"/>
        <end position="460"/>
    </location>
</feature>
<feature type="active site" description="Proton acceptor" evidence="1">
    <location>
        <position position="273"/>
    </location>
</feature>
<feature type="active site" evidence="1">
    <location>
        <position position="321"/>
    </location>
</feature>
<feature type="active site" description="Nucleophile" evidence="1">
    <location>
        <position position="371"/>
    </location>
</feature>
<dbReference type="EC" id="2.3.1.269" evidence="1"/>
<dbReference type="EMBL" id="AE000512">
    <property type="protein sequence ID" value="AAD35658.1"/>
    <property type="molecule type" value="Genomic_DNA"/>
</dbReference>
<dbReference type="PIR" id="H72359">
    <property type="entry name" value="H72359"/>
</dbReference>
<dbReference type="RefSeq" id="NP_228383.1">
    <property type="nucleotide sequence ID" value="NC_000853.1"/>
</dbReference>
<dbReference type="SMR" id="Q9WZ43"/>
<dbReference type="STRING" id="243274.TM_0573"/>
<dbReference type="PaxDb" id="243274-THEMA_01805"/>
<dbReference type="EnsemblBacteria" id="AAD35658">
    <property type="protein sequence ID" value="AAD35658"/>
    <property type="gene ID" value="TM_0573"/>
</dbReference>
<dbReference type="KEGG" id="tma:TM0573"/>
<dbReference type="PATRIC" id="fig|243274.5.peg.582"/>
<dbReference type="eggNOG" id="COG0815">
    <property type="taxonomic scope" value="Bacteria"/>
</dbReference>
<dbReference type="InParanoid" id="Q9WZ43"/>
<dbReference type="OrthoDB" id="9811121at2"/>
<dbReference type="UniPathway" id="UPA00666"/>
<dbReference type="Proteomes" id="UP000008183">
    <property type="component" value="Chromosome"/>
</dbReference>
<dbReference type="GO" id="GO:0005886">
    <property type="term" value="C:plasma membrane"/>
    <property type="evidence" value="ECO:0007669"/>
    <property type="project" value="UniProtKB-SubCell"/>
</dbReference>
<dbReference type="GO" id="GO:0016410">
    <property type="term" value="F:N-acyltransferase activity"/>
    <property type="evidence" value="ECO:0007669"/>
    <property type="project" value="UniProtKB-UniRule"/>
</dbReference>
<dbReference type="GO" id="GO:0042158">
    <property type="term" value="P:lipoprotein biosynthetic process"/>
    <property type="evidence" value="ECO:0007669"/>
    <property type="project" value="UniProtKB-UniRule"/>
</dbReference>
<dbReference type="CDD" id="cd07571">
    <property type="entry name" value="ALP_N-acyl_transferase"/>
    <property type="match status" value="1"/>
</dbReference>
<dbReference type="Gene3D" id="3.60.110.10">
    <property type="entry name" value="Carbon-nitrogen hydrolase"/>
    <property type="match status" value="1"/>
</dbReference>
<dbReference type="HAMAP" id="MF_01148">
    <property type="entry name" value="Lnt"/>
    <property type="match status" value="1"/>
</dbReference>
<dbReference type="InterPro" id="IPR004563">
    <property type="entry name" value="Apolipo_AcylTrfase"/>
</dbReference>
<dbReference type="InterPro" id="IPR003010">
    <property type="entry name" value="C-N_Hydrolase"/>
</dbReference>
<dbReference type="InterPro" id="IPR036526">
    <property type="entry name" value="C-N_Hydrolase_sf"/>
</dbReference>
<dbReference type="InterPro" id="IPR045378">
    <property type="entry name" value="LNT_N"/>
</dbReference>
<dbReference type="NCBIfam" id="TIGR00546">
    <property type="entry name" value="lnt"/>
    <property type="match status" value="1"/>
</dbReference>
<dbReference type="PANTHER" id="PTHR38686">
    <property type="entry name" value="APOLIPOPROTEIN N-ACYLTRANSFERASE"/>
    <property type="match status" value="1"/>
</dbReference>
<dbReference type="PANTHER" id="PTHR38686:SF1">
    <property type="entry name" value="APOLIPOPROTEIN N-ACYLTRANSFERASE"/>
    <property type="match status" value="1"/>
</dbReference>
<dbReference type="Pfam" id="PF00795">
    <property type="entry name" value="CN_hydrolase"/>
    <property type="match status" value="1"/>
</dbReference>
<dbReference type="Pfam" id="PF20154">
    <property type="entry name" value="LNT_N"/>
    <property type="match status" value="1"/>
</dbReference>
<dbReference type="SUPFAM" id="SSF56317">
    <property type="entry name" value="Carbon-nitrogen hydrolase"/>
    <property type="match status" value="1"/>
</dbReference>
<dbReference type="PROSITE" id="PS50263">
    <property type="entry name" value="CN_HYDROLASE"/>
    <property type="match status" value="1"/>
</dbReference>
<evidence type="ECO:0000255" key="1">
    <source>
        <dbReference type="HAMAP-Rule" id="MF_01148"/>
    </source>
</evidence>
<organism>
    <name type="scientific">Thermotoga maritima (strain ATCC 43589 / DSM 3109 / JCM 10099 / NBRC 100826 / MSB8)</name>
    <dbReference type="NCBI Taxonomy" id="243274"/>
    <lineage>
        <taxon>Bacteria</taxon>
        <taxon>Thermotogati</taxon>
        <taxon>Thermotogota</taxon>
        <taxon>Thermotogae</taxon>
        <taxon>Thermotogales</taxon>
        <taxon>Thermotogaceae</taxon>
        <taxon>Thermotoga</taxon>
    </lineage>
</organism>
<reference key="1">
    <citation type="journal article" date="1999" name="Nature">
        <title>Evidence for lateral gene transfer between Archaea and Bacteria from genome sequence of Thermotoga maritima.</title>
        <authorList>
            <person name="Nelson K.E."/>
            <person name="Clayton R.A."/>
            <person name="Gill S.R."/>
            <person name="Gwinn M.L."/>
            <person name="Dodson R.J."/>
            <person name="Haft D.H."/>
            <person name="Hickey E.K."/>
            <person name="Peterson J.D."/>
            <person name="Nelson W.C."/>
            <person name="Ketchum K.A."/>
            <person name="McDonald L.A."/>
            <person name="Utterback T.R."/>
            <person name="Malek J.A."/>
            <person name="Linher K.D."/>
            <person name="Garrett M.M."/>
            <person name="Stewart A.M."/>
            <person name="Cotton M.D."/>
            <person name="Pratt M.S."/>
            <person name="Phillips C.A."/>
            <person name="Richardson D.L."/>
            <person name="Heidelberg J.F."/>
            <person name="Sutton G.G."/>
            <person name="Fleischmann R.D."/>
            <person name="Eisen J.A."/>
            <person name="White O."/>
            <person name="Salzberg S.L."/>
            <person name="Smith H.O."/>
            <person name="Venter J.C."/>
            <person name="Fraser C.M."/>
        </authorList>
    </citation>
    <scope>NUCLEOTIDE SEQUENCE [LARGE SCALE GENOMIC DNA]</scope>
    <source>
        <strain>ATCC 43589 / DSM 3109 / JCM 10099 / NBRC 100826 / MSB8</strain>
    </source>
</reference>